<organism>
    <name type="scientific">Syntrophobacter fumaroxidans (strain DSM 10017 / MPOB)</name>
    <dbReference type="NCBI Taxonomy" id="335543"/>
    <lineage>
        <taxon>Bacteria</taxon>
        <taxon>Pseudomonadati</taxon>
        <taxon>Thermodesulfobacteriota</taxon>
        <taxon>Syntrophobacteria</taxon>
        <taxon>Syntrophobacterales</taxon>
        <taxon>Syntrophobacteraceae</taxon>
        <taxon>Syntrophobacter</taxon>
    </lineage>
</organism>
<gene>
    <name evidence="1" type="primary">coaX</name>
    <name type="ordered locus">Sfum_0549</name>
</gene>
<accession>A0LFP6</accession>
<reference key="1">
    <citation type="submission" date="2006-10" db="EMBL/GenBank/DDBJ databases">
        <title>Complete sequence of Syntrophobacter fumaroxidans MPOB.</title>
        <authorList>
            <consortium name="US DOE Joint Genome Institute"/>
            <person name="Copeland A."/>
            <person name="Lucas S."/>
            <person name="Lapidus A."/>
            <person name="Barry K."/>
            <person name="Detter J.C."/>
            <person name="Glavina del Rio T."/>
            <person name="Hammon N."/>
            <person name="Israni S."/>
            <person name="Pitluck S."/>
            <person name="Goltsman E.G."/>
            <person name="Martinez M."/>
            <person name="Schmutz J."/>
            <person name="Larimer F."/>
            <person name="Land M."/>
            <person name="Hauser L."/>
            <person name="Kyrpides N."/>
            <person name="Kim E."/>
            <person name="Boone D.R."/>
            <person name="Brockman F."/>
            <person name="Culley D."/>
            <person name="Ferry J."/>
            <person name="Gunsalus R."/>
            <person name="McInerney M.J."/>
            <person name="Morrison M."/>
            <person name="Plugge C."/>
            <person name="Rohlin L."/>
            <person name="Scholten J."/>
            <person name="Sieber J."/>
            <person name="Stams A.J.M."/>
            <person name="Worm P."/>
            <person name="Henstra A.M."/>
            <person name="Richardson P."/>
        </authorList>
    </citation>
    <scope>NUCLEOTIDE SEQUENCE [LARGE SCALE GENOMIC DNA]</scope>
    <source>
        <strain>DSM 10017 / MPOB</strain>
    </source>
</reference>
<protein>
    <recommendedName>
        <fullName evidence="1">Type III pantothenate kinase</fullName>
        <ecNumber evidence="1">2.7.1.33</ecNumber>
    </recommendedName>
    <alternativeName>
        <fullName evidence="1">PanK-III</fullName>
    </alternativeName>
    <alternativeName>
        <fullName evidence="1">Pantothenic acid kinase</fullName>
    </alternativeName>
</protein>
<comment type="function">
    <text evidence="1">Catalyzes the phosphorylation of pantothenate (Pan), the first step in CoA biosynthesis.</text>
</comment>
<comment type="catalytic activity">
    <reaction evidence="1">
        <text>(R)-pantothenate + ATP = (R)-4'-phosphopantothenate + ADP + H(+)</text>
        <dbReference type="Rhea" id="RHEA:16373"/>
        <dbReference type="ChEBI" id="CHEBI:10986"/>
        <dbReference type="ChEBI" id="CHEBI:15378"/>
        <dbReference type="ChEBI" id="CHEBI:29032"/>
        <dbReference type="ChEBI" id="CHEBI:30616"/>
        <dbReference type="ChEBI" id="CHEBI:456216"/>
        <dbReference type="EC" id="2.7.1.33"/>
    </reaction>
</comment>
<comment type="cofactor">
    <cofactor evidence="1">
        <name>NH4(+)</name>
        <dbReference type="ChEBI" id="CHEBI:28938"/>
    </cofactor>
    <cofactor evidence="1">
        <name>K(+)</name>
        <dbReference type="ChEBI" id="CHEBI:29103"/>
    </cofactor>
    <text evidence="1">A monovalent cation. Ammonium or potassium.</text>
</comment>
<comment type="pathway">
    <text evidence="1">Cofactor biosynthesis; coenzyme A biosynthesis; CoA from (R)-pantothenate: step 1/5.</text>
</comment>
<comment type="subunit">
    <text evidence="1">Homodimer.</text>
</comment>
<comment type="subcellular location">
    <subcellularLocation>
        <location evidence="1">Cytoplasm</location>
    </subcellularLocation>
</comment>
<comment type="similarity">
    <text evidence="1">Belongs to the type III pantothenate kinase family.</text>
</comment>
<name>COAX_SYNFM</name>
<sequence>MLLAMDIGNTNTVLGLFNEQRLVHDWRIRTEVNTTVDEYGIAIRSLFDAHGFFVADVGSVIISCVVPPVLNSIERFCRKYFNIQPIIVGPGIRTGMPIFYDNPKEVGADRIVNAVAAYDYYRCATIVVDFGTATTFDYISDKGEYMGGVISPGIMISCEALFFKTSKLPRVEIFARPPSVLAKNTIASMNAGIVYGYAGLVEGIITRMRNEIGTNLKVVATGGLAALIASECSLIDDVDDYLTLKGLRIIFERNKKNP</sequence>
<dbReference type="EC" id="2.7.1.33" evidence="1"/>
<dbReference type="EMBL" id="CP000478">
    <property type="protein sequence ID" value="ABK16248.1"/>
    <property type="molecule type" value="Genomic_DNA"/>
</dbReference>
<dbReference type="RefSeq" id="WP_011697421.1">
    <property type="nucleotide sequence ID" value="NC_008554.1"/>
</dbReference>
<dbReference type="SMR" id="A0LFP6"/>
<dbReference type="STRING" id="335543.Sfum_0549"/>
<dbReference type="KEGG" id="sfu:Sfum_0549"/>
<dbReference type="eggNOG" id="COG1521">
    <property type="taxonomic scope" value="Bacteria"/>
</dbReference>
<dbReference type="HOGENOM" id="CLU_066627_1_0_7"/>
<dbReference type="InParanoid" id="A0LFP6"/>
<dbReference type="OrthoDB" id="9804707at2"/>
<dbReference type="UniPathway" id="UPA00241">
    <property type="reaction ID" value="UER00352"/>
</dbReference>
<dbReference type="Proteomes" id="UP000001784">
    <property type="component" value="Chromosome"/>
</dbReference>
<dbReference type="GO" id="GO:0005737">
    <property type="term" value="C:cytoplasm"/>
    <property type="evidence" value="ECO:0007669"/>
    <property type="project" value="UniProtKB-SubCell"/>
</dbReference>
<dbReference type="GO" id="GO:0005524">
    <property type="term" value="F:ATP binding"/>
    <property type="evidence" value="ECO:0007669"/>
    <property type="project" value="UniProtKB-UniRule"/>
</dbReference>
<dbReference type="GO" id="GO:0046872">
    <property type="term" value="F:metal ion binding"/>
    <property type="evidence" value="ECO:0007669"/>
    <property type="project" value="UniProtKB-KW"/>
</dbReference>
<dbReference type="GO" id="GO:0004594">
    <property type="term" value="F:pantothenate kinase activity"/>
    <property type="evidence" value="ECO:0007669"/>
    <property type="project" value="UniProtKB-UniRule"/>
</dbReference>
<dbReference type="GO" id="GO:0015937">
    <property type="term" value="P:coenzyme A biosynthetic process"/>
    <property type="evidence" value="ECO:0007669"/>
    <property type="project" value="UniProtKB-UniRule"/>
</dbReference>
<dbReference type="CDD" id="cd24015">
    <property type="entry name" value="ASKHA_NBD_PanK-III"/>
    <property type="match status" value="1"/>
</dbReference>
<dbReference type="Gene3D" id="3.30.420.40">
    <property type="match status" value="2"/>
</dbReference>
<dbReference type="HAMAP" id="MF_01274">
    <property type="entry name" value="Pantothen_kinase_3"/>
    <property type="match status" value="1"/>
</dbReference>
<dbReference type="InterPro" id="IPR043129">
    <property type="entry name" value="ATPase_NBD"/>
</dbReference>
<dbReference type="InterPro" id="IPR004619">
    <property type="entry name" value="Type_III_PanK"/>
</dbReference>
<dbReference type="NCBIfam" id="TIGR00671">
    <property type="entry name" value="baf"/>
    <property type="match status" value="1"/>
</dbReference>
<dbReference type="NCBIfam" id="NF009848">
    <property type="entry name" value="PRK13318.1-6"/>
    <property type="match status" value="1"/>
</dbReference>
<dbReference type="NCBIfam" id="NF009855">
    <property type="entry name" value="PRK13321.1"/>
    <property type="match status" value="1"/>
</dbReference>
<dbReference type="PANTHER" id="PTHR34265">
    <property type="entry name" value="TYPE III PANTOTHENATE KINASE"/>
    <property type="match status" value="1"/>
</dbReference>
<dbReference type="PANTHER" id="PTHR34265:SF1">
    <property type="entry name" value="TYPE III PANTOTHENATE KINASE"/>
    <property type="match status" value="1"/>
</dbReference>
<dbReference type="Pfam" id="PF03309">
    <property type="entry name" value="Pan_kinase"/>
    <property type="match status" value="1"/>
</dbReference>
<dbReference type="SUPFAM" id="SSF53067">
    <property type="entry name" value="Actin-like ATPase domain"/>
    <property type="match status" value="2"/>
</dbReference>
<keyword id="KW-0067">ATP-binding</keyword>
<keyword id="KW-0173">Coenzyme A biosynthesis</keyword>
<keyword id="KW-0963">Cytoplasm</keyword>
<keyword id="KW-0418">Kinase</keyword>
<keyword id="KW-0479">Metal-binding</keyword>
<keyword id="KW-0547">Nucleotide-binding</keyword>
<keyword id="KW-0630">Potassium</keyword>
<keyword id="KW-1185">Reference proteome</keyword>
<keyword id="KW-0808">Transferase</keyword>
<proteinExistence type="inferred from homology"/>
<evidence type="ECO:0000255" key="1">
    <source>
        <dbReference type="HAMAP-Rule" id="MF_01274"/>
    </source>
</evidence>
<feature type="chain" id="PRO_1000054412" description="Type III pantothenate kinase">
    <location>
        <begin position="1"/>
        <end position="258"/>
    </location>
</feature>
<feature type="active site" description="Proton acceptor" evidence="1">
    <location>
        <position position="109"/>
    </location>
</feature>
<feature type="binding site" evidence="1">
    <location>
        <begin position="6"/>
        <end position="13"/>
    </location>
    <ligand>
        <name>ATP</name>
        <dbReference type="ChEBI" id="CHEBI:30616"/>
    </ligand>
</feature>
<feature type="binding site" evidence="1">
    <location>
        <position position="100"/>
    </location>
    <ligand>
        <name>substrate</name>
    </ligand>
</feature>
<feature type="binding site" evidence="1">
    <location>
        <begin position="107"/>
        <end position="110"/>
    </location>
    <ligand>
        <name>substrate</name>
    </ligand>
</feature>
<feature type="binding site" evidence="1">
    <location>
        <position position="129"/>
    </location>
    <ligand>
        <name>K(+)</name>
        <dbReference type="ChEBI" id="CHEBI:29103"/>
    </ligand>
</feature>
<feature type="binding site" evidence="1">
    <location>
        <position position="132"/>
    </location>
    <ligand>
        <name>ATP</name>
        <dbReference type="ChEBI" id="CHEBI:30616"/>
    </ligand>
</feature>
<feature type="binding site" evidence="1">
    <location>
        <position position="185"/>
    </location>
    <ligand>
        <name>substrate</name>
    </ligand>
</feature>